<reference evidence="6" key="1">
    <citation type="submission" date="2000-10" db="UniProtKB">
        <authorList>
            <person name="Yamamoto Y."/>
            <person name="Asakura Y."/>
            <person name="Yamada H."/>
            <person name="Matsumoto H."/>
        </authorList>
    </citation>
    <scope>PROTEIN SEQUENCE</scope>
    <scope>CATALYTIC ACTIVITY</scope>
    <source>
        <strain>cv. Samsun</strain>
    </source>
</reference>
<name>MDHM_TOBAC</name>
<evidence type="ECO:0000250" key="1"/>
<evidence type="ECO:0000250" key="2">
    <source>
        <dbReference type="UniProtKB" id="P17783"/>
    </source>
</evidence>
<evidence type="ECO:0000255" key="3"/>
<evidence type="ECO:0000255" key="4">
    <source>
        <dbReference type="PROSITE-ProRule" id="PRU10004"/>
    </source>
</evidence>
<evidence type="ECO:0000269" key="5">
    <source ref="1"/>
</evidence>
<evidence type="ECO:0000305" key="6"/>
<accession>P82816</accession>
<organism>
    <name type="scientific">Nicotiana tabacum</name>
    <name type="common">Common tobacco</name>
    <dbReference type="NCBI Taxonomy" id="4097"/>
    <lineage>
        <taxon>Eukaryota</taxon>
        <taxon>Viridiplantae</taxon>
        <taxon>Streptophyta</taxon>
        <taxon>Embryophyta</taxon>
        <taxon>Tracheophyta</taxon>
        <taxon>Spermatophyta</taxon>
        <taxon>Magnoliopsida</taxon>
        <taxon>eudicotyledons</taxon>
        <taxon>Gunneridae</taxon>
        <taxon>Pentapetalae</taxon>
        <taxon>asterids</taxon>
        <taxon>lamiids</taxon>
        <taxon>Solanales</taxon>
        <taxon>Solanaceae</taxon>
        <taxon>Nicotianoideae</taxon>
        <taxon>Nicotianeae</taxon>
        <taxon>Nicotiana</taxon>
    </lineage>
</organism>
<proteinExistence type="evidence at protein level"/>
<sequence length="15" mass="1472">SSEAAPEEKVAILGA</sequence>
<protein>
    <recommendedName>
        <fullName>Malate dehydrogenase, mitochondrial</fullName>
        <ecNumber>1.1.1.37</ecNumber>
    </recommendedName>
</protein>
<feature type="chain" id="PRO_0000257976" description="Malate dehydrogenase, mitochondrial">
    <location>
        <begin position="1"/>
        <end position="15" status="greater than"/>
    </location>
</feature>
<feature type="non-terminal residue">
    <location>
        <position position="15"/>
    </location>
</feature>
<comment type="catalytic activity">
    <reaction evidence="4 5">
        <text>(S)-malate + NAD(+) = oxaloacetate + NADH + H(+)</text>
        <dbReference type="Rhea" id="RHEA:21432"/>
        <dbReference type="ChEBI" id="CHEBI:15378"/>
        <dbReference type="ChEBI" id="CHEBI:15589"/>
        <dbReference type="ChEBI" id="CHEBI:16452"/>
        <dbReference type="ChEBI" id="CHEBI:57540"/>
        <dbReference type="ChEBI" id="CHEBI:57945"/>
        <dbReference type="EC" id="1.1.1.37"/>
    </reaction>
</comment>
<comment type="subunit">
    <text evidence="2">Homodimer.</text>
</comment>
<comment type="subcellular location">
    <subcellularLocation>
        <location evidence="1">Mitochondrion matrix</location>
    </subcellularLocation>
</comment>
<comment type="similarity">
    <text evidence="3">Belongs to the LDH/MDH superfamily. MDH type 1 family.</text>
</comment>
<dbReference type="EC" id="1.1.1.37"/>
<dbReference type="PaxDb" id="4097-P82816"/>
<dbReference type="Proteomes" id="UP000084051">
    <property type="component" value="Unplaced"/>
</dbReference>
<dbReference type="GO" id="GO:0005759">
    <property type="term" value="C:mitochondrial matrix"/>
    <property type="evidence" value="ECO:0007669"/>
    <property type="project" value="UniProtKB-SubCell"/>
</dbReference>
<dbReference type="GO" id="GO:0030060">
    <property type="term" value="F:L-malate dehydrogenase (NAD+) activity"/>
    <property type="evidence" value="ECO:0007669"/>
    <property type="project" value="UniProtKB-EC"/>
</dbReference>
<dbReference type="GO" id="GO:0006099">
    <property type="term" value="P:tricarboxylic acid cycle"/>
    <property type="evidence" value="ECO:0007669"/>
    <property type="project" value="UniProtKB-KW"/>
</dbReference>
<keyword id="KW-0903">Direct protein sequencing</keyword>
<keyword id="KW-0496">Mitochondrion</keyword>
<keyword id="KW-0520">NAD</keyword>
<keyword id="KW-0560">Oxidoreductase</keyword>
<keyword id="KW-1185">Reference proteome</keyword>
<keyword id="KW-0816">Tricarboxylic acid cycle</keyword>